<feature type="chain" id="PRO_1000022121" description="Isoleucine--tRNA ligase">
    <location>
        <begin position="1"/>
        <end position="940"/>
    </location>
</feature>
<feature type="short sequence motif" description="'HIGH' region">
    <location>
        <begin position="58"/>
        <end position="68"/>
    </location>
</feature>
<feature type="short sequence motif" description="'KMSKS' region">
    <location>
        <begin position="605"/>
        <end position="609"/>
    </location>
</feature>
<feature type="binding site" evidence="1">
    <location>
        <position position="564"/>
    </location>
    <ligand>
        <name>L-isoleucyl-5'-AMP</name>
        <dbReference type="ChEBI" id="CHEBI:178002"/>
    </ligand>
</feature>
<feature type="binding site" evidence="1">
    <location>
        <position position="608"/>
    </location>
    <ligand>
        <name>ATP</name>
        <dbReference type="ChEBI" id="CHEBI:30616"/>
    </ligand>
</feature>
<feature type="binding site" evidence="1">
    <location>
        <position position="903"/>
    </location>
    <ligand>
        <name>Zn(2+)</name>
        <dbReference type="ChEBI" id="CHEBI:29105"/>
    </ligand>
</feature>
<feature type="binding site" evidence="1">
    <location>
        <position position="906"/>
    </location>
    <ligand>
        <name>Zn(2+)</name>
        <dbReference type="ChEBI" id="CHEBI:29105"/>
    </ligand>
</feature>
<feature type="binding site" evidence="1">
    <location>
        <position position="923"/>
    </location>
    <ligand>
        <name>Zn(2+)</name>
        <dbReference type="ChEBI" id="CHEBI:29105"/>
    </ligand>
</feature>
<feature type="binding site" evidence="1">
    <location>
        <position position="926"/>
    </location>
    <ligand>
        <name>Zn(2+)</name>
        <dbReference type="ChEBI" id="CHEBI:29105"/>
    </ligand>
</feature>
<evidence type="ECO:0000255" key="1">
    <source>
        <dbReference type="HAMAP-Rule" id="MF_02002"/>
    </source>
</evidence>
<protein>
    <recommendedName>
        <fullName evidence="1">Isoleucine--tRNA ligase</fullName>
        <ecNumber evidence="1">6.1.1.5</ecNumber>
    </recommendedName>
    <alternativeName>
        <fullName evidence="1">Isoleucyl-tRNA synthetase</fullName>
        <shortName evidence="1">IleRS</shortName>
    </alternativeName>
</protein>
<gene>
    <name evidence="1" type="primary">ileS</name>
    <name type="ordered locus">Shewmr4_2957</name>
</gene>
<proteinExistence type="inferred from homology"/>
<comment type="function">
    <text evidence="1">Catalyzes the attachment of isoleucine to tRNA(Ile). As IleRS can inadvertently accommodate and process structurally similar amino acids such as valine, to avoid such errors it has two additional distinct tRNA(Ile)-dependent editing activities. One activity is designated as 'pretransfer' editing and involves the hydrolysis of activated Val-AMP. The other activity is designated 'posttransfer' editing and involves deacylation of mischarged Val-tRNA(Ile).</text>
</comment>
<comment type="catalytic activity">
    <reaction evidence="1">
        <text>tRNA(Ile) + L-isoleucine + ATP = L-isoleucyl-tRNA(Ile) + AMP + diphosphate</text>
        <dbReference type="Rhea" id="RHEA:11060"/>
        <dbReference type="Rhea" id="RHEA-COMP:9666"/>
        <dbReference type="Rhea" id="RHEA-COMP:9695"/>
        <dbReference type="ChEBI" id="CHEBI:30616"/>
        <dbReference type="ChEBI" id="CHEBI:33019"/>
        <dbReference type="ChEBI" id="CHEBI:58045"/>
        <dbReference type="ChEBI" id="CHEBI:78442"/>
        <dbReference type="ChEBI" id="CHEBI:78528"/>
        <dbReference type="ChEBI" id="CHEBI:456215"/>
        <dbReference type="EC" id="6.1.1.5"/>
    </reaction>
</comment>
<comment type="cofactor">
    <cofactor evidence="1">
        <name>Zn(2+)</name>
        <dbReference type="ChEBI" id="CHEBI:29105"/>
    </cofactor>
    <text evidence="1">Binds 1 zinc ion per subunit.</text>
</comment>
<comment type="subunit">
    <text evidence="1">Monomer.</text>
</comment>
<comment type="subcellular location">
    <subcellularLocation>
        <location evidence="1">Cytoplasm</location>
    </subcellularLocation>
</comment>
<comment type="domain">
    <text evidence="1">IleRS has two distinct active sites: one for aminoacylation and one for editing. The misactivated valine is translocated from the active site to the editing site, which sterically excludes the correctly activated isoleucine. The single editing site contains two valyl binding pockets, one specific for each substrate (Val-AMP or Val-tRNA(Ile)).</text>
</comment>
<comment type="similarity">
    <text evidence="1">Belongs to the class-I aminoacyl-tRNA synthetase family. IleS type 1 subfamily.</text>
</comment>
<sequence>MSDYKFTLNLPETEFPMRGNLANREPEMLERWTKDGLYQQIRDSRIGRTPFILHDGPPYANGSIHIGHSVNKILKDIIVKSKTMSGFDAPYVPGWDCHGLPIELKVEQKVGKPGQKISAAEFREECRKYAAEQVDGQRADFIRLGVLGDWQKPYLTMDFATEANIVRSLSKVIENGHLHKGVKPVHWCTDCGSALAEAEVEYEDKTSPAIDVAFTATDSKAVAAQFGVSDYSHPVAMVIWTTTPWTLPANRALSISPELDYSLVEFAKEGATHAVILADVLVEACMTRYGAESHNVLGKVKGAALELVRFKHPFLAFDVPAILGDHVTTDAGTGVVHTAPGHGQDDFVVGQKYGLEVANPVGDNGVYKPDTEFFAGQHVFKANDNVVALLKEKGALLHHVAYRHSYPHCWRHKTPIIFRATPQWFISMDNQNLRKQALSEIEQTQWIPDWGQSRIEKMVENRPDWCISRQRTWGVPITLFVHRETEELHPDSVSLMARVANRIEQEGIQAWWDLDAAELLGEEAEQYRKVTDTLDVWYDSGSTFASVVGARPEFHGHGVDLYLEGSDQHRGWFMSSLMISTAMTGKAPYKQVLTHGFTVDGKGRKMSKSIGNVIAPQQVTNKLGADILRLWVAATDYSGEMTVSDEILNRSADAYRRIRNTARFLLANLNGFDPAKDLVAVEDMVALDRWAVRRAAALQQEIIEAYEQYNFHIVTQKLMQFCSVELGSFYLDIIKDRQYTAKQEGHARRSCQSALFHIAEAMVRWIAPILSFTADEVWQLLPGQRNAYVFTQEWYQDLQSITLDTDLSDAYWENLLTVRNEVNKVIEQARRDKRIGGSLEAEVTLFADAALTEQLTHIGDELRFVLLTSEAKVLPLADATSDAVETELASLKLVVNATTAEKCERCWHHREEVGKIEAHPTLCHRCVTNIEGDGEVRLFA</sequence>
<name>SYI_SHESM</name>
<accession>Q0HFY9</accession>
<reference key="1">
    <citation type="submission" date="2006-08" db="EMBL/GenBank/DDBJ databases">
        <title>Complete sequence of Shewanella sp. MR-4.</title>
        <authorList>
            <consortium name="US DOE Joint Genome Institute"/>
            <person name="Copeland A."/>
            <person name="Lucas S."/>
            <person name="Lapidus A."/>
            <person name="Barry K."/>
            <person name="Detter J.C."/>
            <person name="Glavina del Rio T."/>
            <person name="Hammon N."/>
            <person name="Israni S."/>
            <person name="Dalin E."/>
            <person name="Tice H."/>
            <person name="Pitluck S."/>
            <person name="Kiss H."/>
            <person name="Brettin T."/>
            <person name="Bruce D."/>
            <person name="Han C."/>
            <person name="Tapia R."/>
            <person name="Gilna P."/>
            <person name="Schmutz J."/>
            <person name="Larimer F."/>
            <person name="Land M."/>
            <person name="Hauser L."/>
            <person name="Kyrpides N."/>
            <person name="Mikhailova N."/>
            <person name="Nealson K."/>
            <person name="Konstantinidis K."/>
            <person name="Klappenbach J."/>
            <person name="Tiedje J."/>
            <person name="Richardson P."/>
        </authorList>
    </citation>
    <scope>NUCLEOTIDE SEQUENCE [LARGE SCALE GENOMIC DNA]</scope>
    <source>
        <strain>MR-4</strain>
    </source>
</reference>
<organism>
    <name type="scientific">Shewanella sp. (strain MR-4)</name>
    <dbReference type="NCBI Taxonomy" id="60480"/>
    <lineage>
        <taxon>Bacteria</taxon>
        <taxon>Pseudomonadati</taxon>
        <taxon>Pseudomonadota</taxon>
        <taxon>Gammaproteobacteria</taxon>
        <taxon>Alteromonadales</taxon>
        <taxon>Shewanellaceae</taxon>
        <taxon>Shewanella</taxon>
    </lineage>
</organism>
<dbReference type="EC" id="6.1.1.5" evidence="1"/>
<dbReference type="EMBL" id="CP000446">
    <property type="protein sequence ID" value="ABI40028.1"/>
    <property type="molecule type" value="Genomic_DNA"/>
</dbReference>
<dbReference type="RefSeq" id="WP_011623705.1">
    <property type="nucleotide sequence ID" value="NC_008321.1"/>
</dbReference>
<dbReference type="SMR" id="Q0HFY9"/>
<dbReference type="KEGG" id="she:Shewmr4_2957"/>
<dbReference type="HOGENOM" id="CLU_001493_7_1_6"/>
<dbReference type="GO" id="GO:0005829">
    <property type="term" value="C:cytosol"/>
    <property type="evidence" value="ECO:0007669"/>
    <property type="project" value="TreeGrafter"/>
</dbReference>
<dbReference type="GO" id="GO:0002161">
    <property type="term" value="F:aminoacyl-tRNA deacylase activity"/>
    <property type="evidence" value="ECO:0007669"/>
    <property type="project" value="InterPro"/>
</dbReference>
<dbReference type="GO" id="GO:0005524">
    <property type="term" value="F:ATP binding"/>
    <property type="evidence" value="ECO:0007669"/>
    <property type="project" value="UniProtKB-UniRule"/>
</dbReference>
<dbReference type="GO" id="GO:0004822">
    <property type="term" value="F:isoleucine-tRNA ligase activity"/>
    <property type="evidence" value="ECO:0007669"/>
    <property type="project" value="UniProtKB-UniRule"/>
</dbReference>
<dbReference type="GO" id="GO:0000049">
    <property type="term" value="F:tRNA binding"/>
    <property type="evidence" value="ECO:0007669"/>
    <property type="project" value="InterPro"/>
</dbReference>
<dbReference type="GO" id="GO:0008270">
    <property type="term" value="F:zinc ion binding"/>
    <property type="evidence" value="ECO:0007669"/>
    <property type="project" value="UniProtKB-UniRule"/>
</dbReference>
<dbReference type="GO" id="GO:0006428">
    <property type="term" value="P:isoleucyl-tRNA aminoacylation"/>
    <property type="evidence" value="ECO:0007669"/>
    <property type="project" value="UniProtKB-UniRule"/>
</dbReference>
<dbReference type="CDD" id="cd07960">
    <property type="entry name" value="Anticodon_Ia_Ile_BEm"/>
    <property type="match status" value="1"/>
</dbReference>
<dbReference type="CDD" id="cd00818">
    <property type="entry name" value="IleRS_core"/>
    <property type="match status" value="1"/>
</dbReference>
<dbReference type="FunFam" id="1.10.730.20:FF:000001">
    <property type="entry name" value="Isoleucine--tRNA ligase"/>
    <property type="match status" value="1"/>
</dbReference>
<dbReference type="FunFam" id="3.40.50.620:FF:000042">
    <property type="entry name" value="Isoleucine--tRNA ligase"/>
    <property type="match status" value="1"/>
</dbReference>
<dbReference type="FunFam" id="3.40.50.620:FF:000048">
    <property type="entry name" value="Isoleucine--tRNA ligase"/>
    <property type="match status" value="1"/>
</dbReference>
<dbReference type="Gene3D" id="1.10.730.20">
    <property type="match status" value="1"/>
</dbReference>
<dbReference type="Gene3D" id="3.40.50.620">
    <property type="entry name" value="HUPs"/>
    <property type="match status" value="2"/>
</dbReference>
<dbReference type="HAMAP" id="MF_02002">
    <property type="entry name" value="Ile_tRNA_synth_type1"/>
    <property type="match status" value="1"/>
</dbReference>
<dbReference type="InterPro" id="IPR001412">
    <property type="entry name" value="aa-tRNA-synth_I_CS"/>
</dbReference>
<dbReference type="InterPro" id="IPR002300">
    <property type="entry name" value="aa-tRNA-synth_Ia"/>
</dbReference>
<dbReference type="InterPro" id="IPR033708">
    <property type="entry name" value="Anticodon_Ile_BEm"/>
</dbReference>
<dbReference type="InterPro" id="IPR002301">
    <property type="entry name" value="Ile-tRNA-ligase"/>
</dbReference>
<dbReference type="InterPro" id="IPR023585">
    <property type="entry name" value="Ile-tRNA-ligase_type1"/>
</dbReference>
<dbReference type="InterPro" id="IPR050081">
    <property type="entry name" value="Ile-tRNA_ligase"/>
</dbReference>
<dbReference type="InterPro" id="IPR013155">
    <property type="entry name" value="M/V/L/I-tRNA-synth_anticd-bd"/>
</dbReference>
<dbReference type="InterPro" id="IPR014729">
    <property type="entry name" value="Rossmann-like_a/b/a_fold"/>
</dbReference>
<dbReference type="InterPro" id="IPR009080">
    <property type="entry name" value="tRNAsynth_Ia_anticodon-bd"/>
</dbReference>
<dbReference type="InterPro" id="IPR009008">
    <property type="entry name" value="Val/Leu/Ile-tRNA-synth_edit"/>
</dbReference>
<dbReference type="InterPro" id="IPR010663">
    <property type="entry name" value="Znf_FPG/IleRS"/>
</dbReference>
<dbReference type="NCBIfam" id="TIGR00392">
    <property type="entry name" value="ileS"/>
    <property type="match status" value="1"/>
</dbReference>
<dbReference type="PANTHER" id="PTHR42765:SF1">
    <property type="entry name" value="ISOLEUCINE--TRNA LIGASE, MITOCHONDRIAL"/>
    <property type="match status" value="1"/>
</dbReference>
<dbReference type="PANTHER" id="PTHR42765">
    <property type="entry name" value="SOLEUCYL-TRNA SYNTHETASE"/>
    <property type="match status" value="1"/>
</dbReference>
<dbReference type="Pfam" id="PF08264">
    <property type="entry name" value="Anticodon_1"/>
    <property type="match status" value="1"/>
</dbReference>
<dbReference type="Pfam" id="PF00133">
    <property type="entry name" value="tRNA-synt_1"/>
    <property type="match status" value="1"/>
</dbReference>
<dbReference type="Pfam" id="PF06827">
    <property type="entry name" value="zf-FPG_IleRS"/>
    <property type="match status" value="1"/>
</dbReference>
<dbReference type="PRINTS" id="PR00984">
    <property type="entry name" value="TRNASYNTHILE"/>
</dbReference>
<dbReference type="SUPFAM" id="SSF47323">
    <property type="entry name" value="Anticodon-binding domain of a subclass of class I aminoacyl-tRNA synthetases"/>
    <property type="match status" value="1"/>
</dbReference>
<dbReference type="SUPFAM" id="SSF52374">
    <property type="entry name" value="Nucleotidylyl transferase"/>
    <property type="match status" value="1"/>
</dbReference>
<dbReference type="SUPFAM" id="SSF50677">
    <property type="entry name" value="ValRS/IleRS/LeuRS editing domain"/>
    <property type="match status" value="1"/>
</dbReference>
<dbReference type="PROSITE" id="PS00178">
    <property type="entry name" value="AA_TRNA_LIGASE_I"/>
    <property type="match status" value="1"/>
</dbReference>
<keyword id="KW-0030">Aminoacyl-tRNA synthetase</keyword>
<keyword id="KW-0067">ATP-binding</keyword>
<keyword id="KW-0963">Cytoplasm</keyword>
<keyword id="KW-0436">Ligase</keyword>
<keyword id="KW-0479">Metal-binding</keyword>
<keyword id="KW-0547">Nucleotide-binding</keyword>
<keyword id="KW-0648">Protein biosynthesis</keyword>
<keyword id="KW-0862">Zinc</keyword>